<evidence type="ECO:0000250" key="1">
    <source>
        <dbReference type="UniProtKB" id="P79085"/>
    </source>
</evidence>
<evidence type="ECO:0000255" key="2"/>
<evidence type="ECO:0000255" key="3">
    <source>
        <dbReference type="PROSITE-ProRule" id="PRU01243"/>
    </source>
</evidence>
<evidence type="ECO:0000269" key="4">
    <source>
    </source>
</evidence>
<evidence type="ECO:0000305" key="5"/>
<evidence type="ECO:0000312" key="6">
    <source>
        <dbReference type="EMBL" id="AAT66565.1"/>
    </source>
</evidence>
<protein>
    <recommendedName>
        <fullName>Allergen Ste b 1</fullName>
    </recommendedName>
    <alternativeName>
        <fullName>Alt a 1-like protein</fullName>
    </alternativeName>
    <allergenName>Ste b 1</allergenName>
</protein>
<sequence length="137" mass="14790">ALFAAAGLAAAAPFETRQDYASCPVSTQGDYVWKISEFSGRKPEGTYYNSLSFNIKATNEGTLDFTCSAQADKLEDDKFYPCGENSSMSFAFQSDRNGLLFRQDVSNDITYVATATLPNYCRAGGDGPKDVICQGAS</sequence>
<organism>
    <name type="scientific">Stemphylium botryosum</name>
    <name type="common">Black stalk rot fungus</name>
    <name type="synonym">Pleospora tarda</name>
    <dbReference type="NCBI Taxonomy" id="120510"/>
    <lineage>
        <taxon>Eukaryota</taxon>
        <taxon>Fungi</taxon>
        <taxon>Dikarya</taxon>
        <taxon>Ascomycota</taxon>
        <taxon>Pezizomycotina</taxon>
        <taxon>Dothideomycetes</taxon>
        <taxon>Pleosporomycetidae</taxon>
        <taxon>Pleosporales</taxon>
        <taxon>Pleosporineae</taxon>
        <taxon>Pleosporaceae</taxon>
        <taxon>Stemphylium</taxon>
    </lineage>
</organism>
<gene>
    <name type="primary">alta1</name>
</gene>
<name>ALTA1_STEBT</name>
<proteinExistence type="evidence at protein level"/>
<keyword id="KW-0020">Allergen</keyword>
<keyword id="KW-0903">Direct protein sequencing</keyword>
<keyword id="KW-1015">Disulfide bond</keyword>
<keyword id="KW-0964">Secreted</keyword>
<keyword id="KW-0732">Signal</keyword>
<feature type="signal peptide" evidence="2">
    <location>
        <begin position="1" status="less than"/>
        <end position="18"/>
    </location>
</feature>
<feature type="chain" id="PRO_0000320211" description="Allergen Ste b 1">
    <location>
        <begin position="19"/>
        <end position="137"/>
    </location>
</feature>
<feature type="domain" description="AA1-like" evidence="3">
    <location>
        <begin position="28"/>
        <end position="137" status="greater than"/>
    </location>
</feature>
<feature type="disulfide bond" description="Interchain" evidence="1">
    <location>
        <position position="23"/>
    </location>
</feature>
<feature type="disulfide bond" evidence="3">
    <location>
        <begin position="67"/>
        <end position="82"/>
    </location>
</feature>
<feature type="disulfide bond" evidence="3">
    <location>
        <begin position="121"/>
        <end position="133"/>
    </location>
</feature>
<feature type="sequence conflict" description="In Ref. 2; AA sequence." evidence="5" ref="2">
    <original>S</original>
    <variation>Y</variation>
    <location>
        <position position="39"/>
    </location>
</feature>
<feature type="sequence conflict" description="In Ref. 2; AA sequence." evidence="5" ref="2">
    <original>S</original>
    <variation>G</variation>
    <location>
        <position position="52"/>
    </location>
</feature>
<feature type="sequence conflict" description="In Ref. 2; AA sequence." evidence="5" ref="2">
    <original>E</original>
    <variation>G</variation>
    <location>
        <position position="60"/>
    </location>
</feature>
<feature type="sequence conflict" description="In Ref. 2; AA sequence." evidence="5" ref="2">
    <original>DKFYP</original>
    <variation>HKWYS</variation>
    <location>
        <begin position="77"/>
        <end position="81"/>
    </location>
</feature>
<feature type="sequence conflict" description="In Ref. 2; AA sequence." evidence="5" ref="2">
    <original>S</original>
    <variation>F</variation>
    <location>
        <position position="87"/>
    </location>
</feature>
<feature type="sequence conflict" description="In Ref. 2; AA sequence." evidence="5" ref="2">
    <original>AFQ</original>
    <variation>SFD</variation>
    <location>
        <begin position="91"/>
        <end position="93"/>
    </location>
</feature>
<feature type="non-terminal residue" evidence="6">
    <location>
        <position position="1"/>
    </location>
</feature>
<feature type="non-terminal residue" evidence="6">
    <location>
        <position position="137"/>
    </location>
</feature>
<dbReference type="EMBL" id="AY563274">
    <property type="protein sequence ID" value="AAT66565.1"/>
    <property type="molecule type" value="Genomic_DNA"/>
</dbReference>
<dbReference type="SMR" id="Q5EZC5"/>
<dbReference type="Allergome" id="2636">
    <property type="allergen name" value="Ste b 1"/>
</dbReference>
<dbReference type="GO" id="GO:0005576">
    <property type="term" value="C:extracellular region"/>
    <property type="evidence" value="ECO:0007669"/>
    <property type="project" value="UniProtKB-SubCell"/>
</dbReference>
<dbReference type="CDD" id="cd12798">
    <property type="entry name" value="Alt_A1"/>
    <property type="match status" value="1"/>
</dbReference>
<dbReference type="Gene3D" id="2.40.350.20">
    <property type="match status" value="1"/>
</dbReference>
<dbReference type="InterPro" id="IPR032382">
    <property type="entry name" value="AltA1"/>
</dbReference>
<dbReference type="Pfam" id="PF16541">
    <property type="entry name" value="AltA1"/>
    <property type="match status" value="1"/>
</dbReference>
<dbReference type="PROSITE" id="PS51895">
    <property type="entry name" value="AA1"/>
    <property type="match status" value="1"/>
</dbReference>
<reference evidence="6" key="1">
    <citation type="journal article" date="2005" name="Fungal Genet. Biol.">
        <title>Alt a 1 allergen homologs from Alternaria and related taxa: analysis of phylogenetic content and secondary structure.</title>
        <authorList>
            <person name="Hong S.G."/>
            <person name="Cramer R.A."/>
            <person name="Lawrence C.B."/>
            <person name="Pryor B.M."/>
        </authorList>
    </citation>
    <scope>NUCLEOTIDE SEQUENCE [GENOMIC DNA]</scope>
    <source>
        <strain evidence="6">BMP 0360</strain>
    </source>
</reference>
<reference key="2">
    <citation type="journal article" date="2011" name="Med. Mycol.">
        <title>Identification of allergens homologous to Alt a 1 from Stemphylium botryosum and Ulocladium botrytis.</title>
        <authorList>
            <person name="Gutierrez-Rodriguez A."/>
            <person name="Postigo I."/>
            <person name="Guisantes J.A."/>
            <person name="Sunen E."/>
            <person name="Martinez J."/>
        </authorList>
    </citation>
    <scope>PROTEIN SEQUENCE OF 35-96</scope>
    <scope>SUBCELLULAR LOCATION</scope>
    <scope>MASS SPECTROMETRY</scope>
    <scope>ALLERGEN</scope>
    <source>
        <strain evidence="4">FMR3952</strain>
    </source>
</reference>
<accession>Q5EZC5</accession>
<comment type="subunit">
    <text evidence="1">Homodimer; disulfide-linked.</text>
</comment>
<comment type="subcellular location">
    <subcellularLocation>
        <location evidence="4">Secreted</location>
    </subcellularLocation>
</comment>
<comment type="mass spectrometry" mass="15100.0" method="MALDI" evidence="4"/>
<comment type="allergen">
    <text evidence="4">Causes an allergic reaction in human. Binds to IgE.</text>
</comment>
<comment type="miscellaneous">
    <text evidence="4">On the 2D-gel the determined pI of this protein is: 4.0, its MW is: 17 kDa.</text>
</comment>
<comment type="similarity">
    <text evidence="5">Belongs to the ALTA1 family.</text>
</comment>